<feature type="chain" id="PRO_0000243612" description="Glutamate-1-semialdehyde 2,1-aminomutase">
    <location>
        <begin position="1"/>
        <end position="423"/>
    </location>
</feature>
<feature type="modified residue" description="N6-(pyridoxal phosphate)lysine" evidence="1">
    <location>
        <position position="262"/>
    </location>
</feature>
<organism>
    <name type="scientific">Saccharophagus degradans (strain 2-40 / ATCC 43961 / DSM 17024)</name>
    <dbReference type="NCBI Taxonomy" id="203122"/>
    <lineage>
        <taxon>Bacteria</taxon>
        <taxon>Pseudomonadati</taxon>
        <taxon>Pseudomonadota</taxon>
        <taxon>Gammaproteobacteria</taxon>
        <taxon>Cellvibrionales</taxon>
        <taxon>Cellvibrionaceae</taxon>
        <taxon>Saccharophagus</taxon>
    </lineage>
</organism>
<comment type="catalytic activity">
    <reaction evidence="1">
        <text>(S)-4-amino-5-oxopentanoate = 5-aminolevulinate</text>
        <dbReference type="Rhea" id="RHEA:14265"/>
        <dbReference type="ChEBI" id="CHEBI:57501"/>
        <dbReference type="ChEBI" id="CHEBI:356416"/>
        <dbReference type="EC" id="5.4.3.8"/>
    </reaction>
</comment>
<comment type="cofactor">
    <cofactor evidence="1">
        <name>pyridoxal 5'-phosphate</name>
        <dbReference type="ChEBI" id="CHEBI:597326"/>
    </cofactor>
</comment>
<comment type="pathway">
    <text evidence="1">Porphyrin-containing compound metabolism; protoporphyrin-IX biosynthesis; 5-aminolevulinate from L-glutamyl-tRNA(Glu): step 2/2.</text>
</comment>
<comment type="subunit">
    <text evidence="1">Homodimer.</text>
</comment>
<comment type="subcellular location">
    <subcellularLocation>
        <location evidence="1">Cytoplasm</location>
    </subcellularLocation>
</comment>
<comment type="similarity">
    <text evidence="1">Belongs to the class-III pyridoxal-phosphate-dependent aminotransferase family. HemL subfamily.</text>
</comment>
<protein>
    <recommendedName>
        <fullName evidence="1">Glutamate-1-semialdehyde 2,1-aminomutase</fullName>
        <shortName evidence="1">GSA</shortName>
        <ecNumber evidence="1">5.4.3.8</ecNumber>
    </recommendedName>
    <alternativeName>
        <fullName evidence="1">Glutamate-1-semialdehyde aminotransferase</fullName>
        <shortName evidence="1">GSA-AT</shortName>
    </alternativeName>
</protein>
<sequence>MSQAFENAQQYIPGGVNSPVRAFKAVGGEPVFIKRAKGAYLYDINDKRYVDYVLSWGPMILGHADDDVLAAVTEKLQYGLSFGAPTEIETELAKKICNIMPGMDKVRFVSSGTEATMSAIRLARGYTGRDKIIKFEGCYHGHSDSLLIKAGSGALTFGVPSSPGVPACLAEHTVTLTYNNIEQVKQAFAEIGDQIACVIVEPVAGNMNCIPPIAGFLETLREECTKAGSLLILDEVMTGFRLGITGAQGYYGVQPDITTLGKVMGGGMPVGAFGGSKEVMDYIAPTGPVYQAGTLSGNPVAMAAGLATVQKLENPDFYAPLFAKTKTLCEGIQTLAKEAGIPLTGNYVGTMWGLFFTEEEKVTNYQQVMACDIPRFNKFFHGLLEEGVYIAPASYEAGFLSAAHTDADIDFTLQAAKNVFARI</sequence>
<proteinExistence type="inferred from homology"/>
<dbReference type="EC" id="5.4.3.8" evidence="1"/>
<dbReference type="EMBL" id="CP000282">
    <property type="protein sequence ID" value="ABD80089.1"/>
    <property type="molecule type" value="Genomic_DNA"/>
</dbReference>
<dbReference type="RefSeq" id="WP_011467310.1">
    <property type="nucleotide sequence ID" value="NC_007912.1"/>
</dbReference>
<dbReference type="SMR" id="Q21MJ0"/>
<dbReference type="STRING" id="203122.Sde_0827"/>
<dbReference type="GeneID" id="98612509"/>
<dbReference type="KEGG" id="sde:Sde_0827"/>
<dbReference type="eggNOG" id="COG0001">
    <property type="taxonomic scope" value="Bacteria"/>
</dbReference>
<dbReference type="HOGENOM" id="CLU_016922_1_5_6"/>
<dbReference type="OrthoDB" id="9801052at2"/>
<dbReference type="UniPathway" id="UPA00251">
    <property type="reaction ID" value="UER00317"/>
</dbReference>
<dbReference type="Proteomes" id="UP000001947">
    <property type="component" value="Chromosome"/>
</dbReference>
<dbReference type="GO" id="GO:0005737">
    <property type="term" value="C:cytoplasm"/>
    <property type="evidence" value="ECO:0007669"/>
    <property type="project" value="UniProtKB-SubCell"/>
</dbReference>
<dbReference type="GO" id="GO:0042286">
    <property type="term" value="F:glutamate-1-semialdehyde 2,1-aminomutase activity"/>
    <property type="evidence" value="ECO:0007669"/>
    <property type="project" value="UniProtKB-UniRule"/>
</dbReference>
<dbReference type="GO" id="GO:0030170">
    <property type="term" value="F:pyridoxal phosphate binding"/>
    <property type="evidence" value="ECO:0007669"/>
    <property type="project" value="InterPro"/>
</dbReference>
<dbReference type="GO" id="GO:0008483">
    <property type="term" value="F:transaminase activity"/>
    <property type="evidence" value="ECO:0007669"/>
    <property type="project" value="InterPro"/>
</dbReference>
<dbReference type="GO" id="GO:0006782">
    <property type="term" value="P:protoporphyrinogen IX biosynthetic process"/>
    <property type="evidence" value="ECO:0007669"/>
    <property type="project" value="UniProtKB-UniRule"/>
</dbReference>
<dbReference type="CDD" id="cd00610">
    <property type="entry name" value="OAT_like"/>
    <property type="match status" value="1"/>
</dbReference>
<dbReference type="FunFam" id="3.40.640.10:FF:000021">
    <property type="entry name" value="Glutamate-1-semialdehyde 2,1-aminomutase"/>
    <property type="match status" value="1"/>
</dbReference>
<dbReference type="Gene3D" id="3.90.1150.10">
    <property type="entry name" value="Aspartate Aminotransferase, domain 1"/>
    <property type="match status" value="1"/>
</dbReference>
<dbReference type="Gene3D" id="3.40.640.10">
    <property type="entry name" value="Type I PLP-dependent aspartate aminotransferase-like (Major domain)"/>
    <property type="match status" value="1"/>
</dbReference>
<dbReference type="HAMAP" id="MF_00375">
    <property type="entry name" value="HemL_aminotrans_3"/>
    <property type="match status" value="1"/>
</dbReference>
<dbReference type="InterPro" id="IPR004639">
    <property type="entry name" value="4pyrrol_synth_GluAld_NH2Trfase"/>
</dbReference>
<dbReference type="InterPro" id="IPR005814">
    <property type="entry name" value="Aminotrans_3"/>
</dbReference>
<dbReference type="InterPro" id="IPR049704">
    <property type="entry name" value="Aminotrans_3_PPA_site"/>
</dbReference>
<dbReference type="InterPro" id="IPR015424">
    <property type="entry name" value="PyrdxlP-dep_Trfase"/>
</dbReference>
<dbReference type="InterPro" id="IPR015421">
    <property type="entry name" value="PyrdxlP-dep_Trfase_major"/>
</dbReference>
<dbReference type="InterPro" id="IPR015422">
    <property type="entry name" value="PyrdxlP-dep_Trfase_small"/>
</dbReference>
<dbReference type="NCBIfam" id="TIGR00713">
    <property type="entry name" value="hemL"/>
    <property type="match status" value="1"/>
</dbReference>
<dbReference type="NCBIfam" id="NF000818">
    <property type="entry name" value="PRK00062.1"/>
    <property type="match status" value="1"/>
</dbReference>
<dbReference type="PANTHER" id="PTHR43713">
    <property type="entry name" value="GLUTAMATE-1-SEMIALDEHYDE 2,1-AMINOMUTASE"/>
    <property type="match status" value="1"/>
</dbReference>
<dbReference type="PANTHER" id="PTHR43713:SF3">
    <property type="entry name" value="GLUTAMATE-1-SEMIALDEHYDE 2,1-AMINOMUTASE 1, CHLOROPLASTIC-RELATED"/>
    <property type="match status" value="1"/>
</dbReference>
<dbReference type="Pfam" id="PF00202">
    <property type="entry name" value="Aminotran_3"/>
    <property type="match status" value="1"/>
</dbReference>
<dbReference type="SUPFAM" id="SSF53383">
    <property type="entry name" value="PLP-dependent transferases"/>
    <property type="match status" value="1"/>
</dbReference>
<dbReference type="PROSITE" id="PS00600">
    <property type="entry name" value="AA_TRANSFER_CLASS_3"/>
    <property type="match status" value="1"/>
</dbReference>
<name>GSA_SACD2</name>
<evidence type="ECO:0000255" key="1">
    <source>
        <dbReference type="HAMAP-Rule" id="MF_00375"/>
    </source>
</evidence>
<accession>Q21MJ0</accession>
<reference key="1">
    <citation type="journal article" date="2008" name="PLoS Genet.">
        <title>Complete genome sequence of the complex carbohydrate-degrading marine bacterium, Saccharophagus degradans strain 2-40 T.</title>
        <authorList>
            <person name="Weiner R.M."/>
            <person name="Taylor L.E. II"/>
            <person name="Henrissat B."/>
            <person name="Hauser L."/>
            <person name="Land M."/>
            <person name="Coutinho P.M."/>
            <person name="Rancurel C."/>
            <person name="Saunders E.H."/>
            <person name="Longmire A.G."/>
            <person name="Zhang H."/>
            <person name="Bayer E.A."/>
            <person name="Gilbert H.J."/>
            <person name="Larimer F."/>
            <person name="Zhulin I.B."/>
            <person name="Ekborg N.A."/>
            <person name="Lamed R."/>
            <person name="Richardson P.M."/>
            <person name="Borovok I."/>
            <person name="Hutcheson S."/>
        </authorList>
    </citation>
    <scope>NUCLEOTIDE SEQUENCE [LARGE SCALE GENOMIC DNA]</scope>
    <source>
        <strain>2-40 / ATCC 43961 / DSM 17024</strain>
    </source>
</reference>
<gene>
    <name evidence="1" type="primary">hemL</name>
    <name type="ordered locus">Sde_0827</name>
</gene>
<keyword id="KW-0963">Cytoplasm</keyword>
<keyword id="KW-0413">Isomerase</keyword>
<keyword id="KW-0627">Porphyrin biosynthesis</keyword>
<keyword id="KW-0663">Pyridoxal phosphate</keyword>
<keyword id="KW-1185">Reference proteome</keyword>